<sequence>MLQGRREAKKSYALFSSTFFFFFICFLSSSSAELTDKGVNFEVVALIGIKSSLTDPHGVLMNWDDTAVDPCSWNMITCSDGFVIRLEAPSQNLSGTLSSSIGNLTNLQTVLLQNNYITGNIPHEIGKLMKLKTLDLSTNNFTGQIPFTLSYSKNLQYLRVNNNSLTGTIPSSLANMTQLTFLDLSYNNLSGPVPRSLAKTFNVMGNSQICPTGTEKDCNGTQPKPMSITLNSSQNKSSDGGTKNRKIAVVFGVSLTCVCLLIIGFGFLLWWRRRHNKQVLFFDINEQNKEEMCLGNLRRFNFKELQSATSNFSSKNLVGKGGFGNVYKGCLHDGSIIAVKRLKDINNGGGEVQFQTELEMISLAVHRNLLRLYGFCTTSSERLLVYPYMSNGSVASRLKAKPVLDWGTRKRIALGAGRGLLYLHEQCDPKIIHRDVKAANILLDDYFEAVVGDFGLAKLLDHEESHVTTAVRGTVGHIAPEYLSTGQSSEKTDVFGFGILLLELITGLRALEFGKAANQRGAILDWVKKLQQEKKLEQIVDKDLKSNYDRIEVEEMVQVALLCTQYLPIHRPKMSEVVRMLEGDGLVEKWEASSQRAETNRSYSKPNEFSSSERYSDLTDDSSVLVQAMELSGPR</sequence>
<keyword id="KW-0025">Alternative splicing</keyword>
<keyword id="KW-0067">ATP-binding</keyword>
<keyword id="KW-1003">Cell membrane</keyword>
<keyword id="KW-0325">Glycoprotein</keyword>
<keyword id="KW-0945">Host-virus interaction</keyword>
<keyword id="KW-0418">Kinase</keyword>
<keyword id="KW-0433">Leucine-rich repeat</keyword>
<keyword id="KW-0472">Membrane</keyword>
<keyword id="KW-0547">Nucleotide-binding</keyword>
<keyword id="KW-0597">Phosphoprotein</keyword>
<keyword id="KW-0611">Plant defense</keyword>
<keyword id="KW-0675">Receptor</keyword>
<keyword id="KW-1185">Reference proteome</keyword>
<keyword id="KW-0677">Repeat</keyword>
<keyword id="KW-0723">Serine/threonine-protein kinase</keyword>
<keyword id="KW-0732">Signal</keyword>
<keyword id="KW-0808">Transferase</keyword>
<keyword id="KW-0812">Transmembrane</keyword>
<keyword id="KW-1133">Transmembrane helix</keyword>
<proteinExistence type="evidence at protein level"/>
<evidence type="ECO:0000250" key="1"/>
<evidence type="ECO:0000250" key="2">
    <source>
        <dbReference type="UniProtKB" id="Q94AG2"/>
    </source>
</evidence>
<evidence type="ECO:0000250" key="3">
    <source>
        <dbReference type="UniProtKB" id="Q94F62"/>
    </source>
</evidence>
<evidence type="ECO:0000250" key="4">
    <source>
        <dbReference type="UniProtKB" id="Q9LSI9"/>
    </source>
</evidence>
<evidence type="ECO:0000255" key="5"/>
<evidence type="ECO:0000255" key="6">
    <source>
        <dbReference type="PROSITE-ProRule" id="PRU00159"/>
    </source>
</evidence>
<evidence type="ECO:0000255" key="7">
    <source>
        <dbReference type="PROSITE-ProRule" id="PRU10027"/>
    </source>
</evidence>
<evidence type="ECO:0000256" key="8">
    <source>
        <dbReference type="SAM" id="MobiDB-lite"/>
    </source>
</evidence>
<evidence type="ECO:0000269" key="9">
    <source>
    </source>
</evidence>
<evidence type="ECO:0000269" key="10">
    <source>
    </source>
</evidence>
<evidence type="ECO:0000305" key="11"/>
<gene>
    <name type="primary">NIK2</name>
    <name type="ordered locus">At3g25560</name>
    <name type="ORF">MWL2.18</name>
</gene>
<protein>
    <recommendedName>
        <fullName>Protein NSP-INTERACTING KINASE 2</fullName>
        <ecNumber>2.7.11.1</ecNumber>
    </recommendedName>
    <alternativeName>
        <fullName>LRR receptor-like serine/threonine-protein kinase NIK2</fullName>
    </alternativeName>
</protein>
<name>NIK2_ARATH</name>
<accession>Q8RY65</accession>
<accession>Q9LSU7</accession>
<comment type="function">
    <text evidence="1 10">Involved in defense response to geminivirus infection (By similarity). Phosphorylates RPL10A in vitro.</text>
</comment>
<comment type="catalytic activity">
    <reaction>
        <text>L-seryl-[protein] + ATP = O-phospho-L-seryl-[protein] + ADP + H(+)</text>
        <dbReference type="Rhea" id="RHEA:17989"/>
        <dbReference type="Rhea" id="RHEA-COMP:9863"/>
        <dbReference type="Rhea" id="RHEA-COMP:11604"/>
        <dbReference type="ChEBI" id="CHEBI:15378"/>
        <dbReference type="ChEBI" id="CHEBI:29999"/>
        <dbReference type="ChEBI" id="CHEBI:30616"/>
        <dbReference type="ChEBI" id="CHEBI:83421"/>
        <dbReference type="ChEBI" id="CHEBI:456216"/>
        <dbReference type="EC" id="2.7.11.1"/>
    </reaction>
</comment>
<comment type="catalytic activity">
    <reaction>
        <text>L-threonyl-[protein] + ATP = O-phospho-L-threonyl-[protein] + ADP + H(+)</text>
        <dbReference type="Rhea" id="RHEA:46608"/>
        <dbReference type="Rhea" id="RHEA-COMP:11060"/>
        <dbReference type="Rhea" id="RHEA-COMP:11605"/>
        <dbReference type="ChEBI" id="CHEBI:15378"/>
        <dbReference type="ChEBI" id="CHEBI:30013"/>
        <dbReference type="ChEBI" id="CHEBI:30616"/>
        <dbReference type="ChEBI" id="CHEBI:61977"/>
        <dbReference type="ChEBI" id="CHEBI:456216"/>
        <dbReference type="EC" id="2.7.11.1"/>
    </reaction>
</comment>
<comment type="activity regulation">
    <text evidence="9">Inhibited by the viral nuclear shuttle protein (NSP) that binds to the region required for oligomerization.</text>
</comment>
<comment type="subunit">
    <text evidence="9">Oligomer. Interacts with geminivirus nuclear shuttle protein (NSP).</text>
</comment>
<comment type="interaction">
    <interactant intactId="EBI-20664696">
        <id>Q8RY65</id>
    </interactant>
    <interactant intactId="EBI-617138">
        <id>Q94F62</id>
        <label>BAK1</label>
    </interactant>
    <organismsDiffer>false</organismsDiffer>
    <experiments>2</experiments>
</comment>
<comment type="interaction">
    <interactant intactId="EBI-20664696">
        <id>Q8RY65</id>
    </interactant>
    <interactant intactId="EBI-16895926">
        <id>Q6XAT2</id>
        <label>ERL2</label>
    </interactant>
    <organismsDiffer>false</organismsDiffer>
    <experiments>4</experiments>
</comment>
<comment type="subcellular location">
    <subcellularLocation>
        <location evidence="9">Cell membrane</location>
        <topology evidence="9">Single-pass type I membrane protein</topology>
    </subcellularLocation>
</comment>
<comment type="alternative products">
    <event type="alternative splicing"/>
    <isoform>
        <id>Q8RY65-1</id>
        <name>1</name>
        <sequence type="displayed"/>
    </isoform>
    <text>A number of isoforms are produced. According to EST sequences.</text>
</comment>
<comment type="tissue specificity">
    <text evidence="9">Expressed in flowers and roots.</text>
</comment>
<comment type="PTM">
    <text>Autophosphorylated.</text>
</comment>
<comment type="similarity">
    <text evidence="6">Belongs to the protein kinase superfamily. Ser/Thr protein kinase family.</text>
</comment>
<comment type="sequence caution" evidence="11">
    <conflict type="erroneous gene model prediction">
        <sequence resource="EMBL-CDS" id="BAB01326"/>
    </conflict>
</comment>
<reference key="1">
    <citation type="journal article" date="2000" name="DNA Res.">
        <title>Structural analysis of Arabidopsis thaliana chromosome 3. I. Sequence features of the regions of 4,504,864 bp covered by sixty P1 and TAC clones.</title>
        <authorList>
            <person name="Sato S."/>
            <person name="Nakamura Y."/>
            <person name="Kaneko T."/>
            <person name="Katoh T."/>
            <person name="Asamizu E."/>
            <person name="Tabata S."/>
        </authorList>
    </citation>
    <scope>NUCLEOTIDE SEQUENCE [LARGE SCALE GENOMIC DNA]</scope>
    <source>
        <strain>cv. Columbia</strain>
    </source>
</reference>
<reference key="2">
    <citation type="journal article" date="2017" name="Plant J.">
        <title>Araport11: a complete reannotation of the Arabidopsis thaliana reference genome.</title>
        <authorList>
            <person name="Cheng C.Y."/>
            <person name="Krishnakumar V."/>
            <person name="Chan A.P."/>
            <person name="Thibaud-Nissen F."/>
            <person name="Schobel S."/>
            <person name="Town C.D."/>
        </authorList>
    </citation>
    <scope>GENOME REANNOTATION</scope>
    <source>
        <strain>cv. Columbia</strain>
    </source>
</reference>
<reference key="3">
    <citation type="journal article" date="2003" name="Science">
        <title>Empirical analysis of transcriptional activity in the Arabidopsis genome.</title>
        <authorList>
            <person name="Yamada K."/>
            <person name="Lim J."/>
            <person name="Dale J.M."/>
            <person name="Chen H."/>
            <person name="Shinn P."/>
            <person name="Palm C.J."/>
            <person name="Southwick A.M."/>
            <person name="Wu H.C."/>
            <person name="Kim C.J."/>
            <person name="Nguyen M."/>
            <person name="Pham P.K."/>
            <person name="Cheuk R.F."/>
            <person name="Karlin-Newmann G."/>
            <person name="Liu S.X."/>
            <person name="Lam B."/>
            <person name="Sakano H."/>
            <person name="Wu T."/>
            <person name="Yu G."/>
            <person name="Miranda M."/>
            <person name="Quach H.L."/>
            <person name="Tripp M."/>
            <person name="Chang C.H."/>
            <person name="Lee J.M."/>
            <person name="Toriumi M.J."/>
            <person name="Chan M.M."/>
            <person name="Tang C.C."/>
            <person name="Onodera C.S."/>
            <person name="Deng J.M."/>
            <person name="Akiyama K."/>
            <person name="Ansari Y."/>
            <person name="Arakawa T."/>
            <person name="Banh J."/>
            <person name="Banno F."/>
            <person name="Bowser L."/>
            <person name="Brooks S.Y."/>
            <person name="Carninci P."/>
            <person name="Chao Q."/>
            <person name="Choy N."/>
            <person name="Enju A."/>
            <person name="Goldsmith A.D."/>
            <person name="Gurjal M."/>
            <person name="Hansen N.F."/>
            <person name="Hayashizaki Y."/>
            <person name="Johnson-Hopson C."/>
            <person name="Hsuan V.W."/>
            <person name="Iida K."/>
            <person name="Karnes M."/>
            <person name="Khan S."/>
            <person name="Koesema E."/>
            <person name="Ishida J."/>
            <person name="Jiang P.X."/>
            <person name="Jones T."/>
            <person name="Kawai J."/>
            <person name="Kamiya A."/>
            <person name="Meyers C."/>
            <person name="Nakajima M."/>
            <person name="Narusaka M."/>
            <person name="Seki M."/>
            <person name="Sakurai T."/>
            <person name="Satou M."/>
            <person name="Tamse R."/>
            <person name="Vaysberg M."/>
            <person name="Wallender E.K."/>
            <person name="Wong C."/>
            <person name="Yamamura Y."/>
            <person name="Yuan S."/>
            <person name="Shinozaki K."/>
            <person name="Davis R.W."/>
            <person name="Theologis A."/>
            <person name="Ecker J.R."/>
        </authorList>
    </citation>
    <scope>NUCLEOTIDE SEQUENCE [LARGE SCALE MRNA]</scope>
    <source>
        <strain>cv. Columbia</strain>
    </source>
</reference>
<reference key="4">
    <citation type="journal article" date="2010" name="BMC Genomics">
        <title>Genome-wide cloning and sequence analysis of leucine-rich repeat receptor-like protein kinase genes in Arabidopsis thaliana.</title>
        <authorList>
            <person name="Gou X."/>
            <person name="He K."/>
            <person name="Yang H."/>
            <person name="Yuan T."/>
            <person name="Lin H."/>
            <person name="Clouse S.D."/>
            <person name="Li J."/>
        </authorList>
    </citation>
    <scope>NUCLEOTIDE SEQUENCE [LARGE SCALE MRNA]</scope>
    <source>
        <strain>cv. Columbia</strain>
    </source>
</reference>
<reference key="5">
    <citation type="journal article" date="2004" name="Genes Dev.">
        <title>The geminivirus nuclear shuttle protein is a virulence factor that suppresses transmembrane receptor kinase activity.</title>
        <authorList>
            <person name="Fontes E.P."/>
            <person name="Santos A.A."/>
            <person name="Luz D.F."/>
            <person name="Waclawovsky A.J."/>
            <person name="Chory J."/>
        </authorList>
    </citation>
    <scope>INTERACTION WITH CABBAGE LEAF CURL VIRUS NSP</scope>
    <scope>ACTIVITY REGULATION</scope>
    <scope>SUBCELLULAR LOCATION</scope>
    <scope>AUTOPHOSPHORYLATION</scope>
    <scope>TISSUE SPECIFICITY</scope>
</reference>
<reference key="6">
    <citation type="journal article" date="2008" name="Virology">
        <title>The ribosomal protein L10/QM-like protein is a component of the NIK-mediated antiviral signaling.</title>
        <authorList>
            <person name="Rocha C.S."/>
            <person name="Santos A.A."/>
            <person name="Machado J.P."/>
            <person name="Fontes E.P."/>
        </authorList>
    </citation>
    <scope>FUNCTION</scope>
</reference>
<dbReference type="EC" id="2.7.11.1"/>
<dbReference type="EMBL" id="AB025639">
    <property type="protein sequence ID" value="BAB01326.1"/>
    <property type="status" value="ALT_SEQ"/>
    <property type="molecule type" value="Genomic_DNA"/>
</dbReference>
<dbReference type="EMBL" id="CP002686">
    <property type="protein sequence ID" value="AEE77026.1"/>
    <property type="molecule type" value="Genomic_DNA"/>
</dbReference>
<dbReference type="EMBL" id="AY075617">
    <property type="protein sequence ID" value="AAL91629.1"/>
    <property type="molecule type" value="mRNA"/>
</dbReference>
<dbReference type="EMBL" id="BT002619">
    <property type="protein sequence ID" value="AAO11535.1"/>
    <property type="molecule type" value="mRNA"/>
</dbReference>
<dbReference type="EMBL" id="FJ708728">
    <property type="protein sequence ID" value="ACN59323.1"/>
    <property type="molecule type" value="mRNA"/>
</dbReference>
<dbReference type="RefSeq" id="NP_189183.2">
    <molecule id="Q8RY65-1"/>
    <property type="nucleotide sequence ID" value="NM_113453.3"/>
</dbReference>
<dbReference type="SMR" id="Q8RY65"/>
<dbReference type="BioGRID" id="7474">
    <property type="interactions" value="17"/>
</dbReference>
<dbReference type="FunCoup" id="Q8RY65">
    <property type="interactions" value="1"/>
</dbReference>
<dbReference type="IntAct" id="Q8RY65">
    <property type="interactions" value="18"/>
</dbReference>
<dbReference type="STRING" id="3702.Q8RY65"/>
<dbReference type="GlyCosmos" id="Q8RY65">
    <property type="glycosylation" value="9 sites, No reported glycans"/>
</dbReference>
<dbReference type="GlyGen" id="Q8RY65">
    <property type="glycosylation" value="9 sites"/>
</dbReference>
<dbReference type="iPTMnet" id="Q8RY65"/>
<dbReference type="PaxDb" id="3702-AT3G25560.3"/>
<dbReference type="ProteomicsDB" id="251138">
    <molecule id="Q8RY65-1"/>
</dbReference>
<dbReference type="EnsemblPlants" id="AT3G25560.1">
    <molecule id="Q8RY65-1"/>
    <property type="protein sequence ID" value="AT3G25560.1"/>
    <property type="gene ID" value="AT3G25560"/>
</dbReference>
<dbReference type="GeneID" id="822143"/>
<dbReference type="Gramene" id="AT3G25560.1">
    <molecule id="Q8RY65-1"/>
    <property type="protein sequence ID" value="AT3G25560.1"/>
    <property type="gene ID" value="AT3G25560"/>
</dbReference>
<dbReference type="KEGG" id="ath:AT3G25560"/>
<dbReference type="Araport" id="AT3G25560"/>
<dbReference type="TAIR" id="AT3G25560">
    <property type="gene designation" value="NIK2"/>
</dbReference>
<dbReference type="eggNOG" id="ENOG502QVM7">
    <property type="taxonomic scope" value="Eukaryota"/>
</dbReference>
<dbReference type="HOGENOM" id="CLU_000288_92_7_1"/>
<dbReference type="InParanoid" id="Q8RY65"/>
<dbReference type="OMA" id="QNCFRTT"/>
<dbReference type="PhylomeDB" id="Q8RY65"/>
<dbReference type="PRO" id="PR:Q8RY65"/>
<dbReference type="Proteomes" id="UP000006548">
    <property type="component" value="Chromosome 3"/>
</dbReference>
<dbReference type="ExpressionAtlas" id="Q8RY65">
    <property type="expression patterns" value="baseline and differential"/>
</dbReference>
<dbReference type="GO" id="GO:0005886">
    <property type="term" value="C:plasma membrane"/>
    <property type="evidence" value="ECO:0007669"/>
    <property type="project" value="UniProtKB-SubCell"/>
</dbReference>
<dbReference type="GO" id="GO:0005524">
    <property type="term" value="F:ATP binding"/>
    <property type="evidence" value="ECO:0007669"/>
    <property type="project" value="UniProtKB-KW"/>
</dbReference>
<dbReference type="GO" id="GO:0106310">
    <property type="term" value="F:protein serine kinase activity"/>
    <property type="evidence" value="ECO:0007669"/>
    <property type="project" value="RHEA"/>
</dbReference>
<dbReference type="GO" id="GO:0004674">
    <property type="term" value="F:protein serine/threonine kinase activity"/>
    <property type="evidence" value="ECO:0007669"/>
    <property type="project" value="UniProtKB-KW"/>
</dbReference>
<dbReference type="GO" id="GO:0006952">
    <property type="term" value="P:defense response"/>
    <property type="evidence" value="ECO:0007669"/>
    <property type="project" value="UniProtKB-KW"/>
</dbReference>
<dbReference type="FunFam" id="3.80.10.10:FF:000021">
    <property type="entry name" value="Putative LRR receptor-like serine/threonine-protein kinase"/>
    <property type="match status" value="1"/>
</dbReference>
<dbReference type="FunFam" id="3.30.200.20:FF:000015">
    <property type="entry name" value="Somatic embryogenesis receptor kinase 1"/>
    <property type="match status" value="1"/>
</dbReference>
<dbReference type="FunFam" id="1.10.510.10:FF:000016">
    <property type="entry name" value="Somatic embryogenesis receptor-like kinase 1"/>
    <property type="match status" value="1"/>
</dbReference>
<dbReference type="Gene3D" id="3.30.200.20">
    <property type="entry name" value="Phosphorylase Kinase, domain 1"/>
    <property type="match status" value="1"/>
</dbReference>
<dbReference type="Gene3D" id="3.80.10.10">
    <property type="entry name" value="Ribonuclease Inhibitor"/>
    <property type="match status" value="1"/>
</dbReference>
<dbReference type="Gene3D" id="1.10.510.10">
    <property type="entry name" value="Transferase(Phosphotransferase) domain 1"/>
    <property type="match status" value="1"/>
</dbReference>
<dbReference type="InterPro" id="IPR011009">
    <property type="entry name" value="Kinase-like_dom_sf"/>
</dbReference>
<dbReference type="InterPro" id="IPR001611">
    <property type="entry name" value="Leu-rich_rpt"/>
</dbReference>
<dbReference type="InterPro" id="IPR032675">
    <property type="entry name" value="LRR_dom_sf"/>
</dbReference>
<dbReference type="InterPro" id="IPR013210">
    <property type="entry name" value="LRR_N_plant-typ"/>
</dbReference>
<dbReference type="InterPro" id="IPR000719">
    <property type="entry name" value="Prot_kinase_dom"/>
</dbReference>
<dbReference type="InterPro" id="IPR017441">
    <property type="entry name" value="Protein_kinase_ATP_BS"/>
</dbReference>
<dbReference type="InterPro" id="IPR008271">
    <property type="entry name" value="Ser/Thr_kinase_AS"/>
</dbReference>
<dbReference type="PANTHER" id="PTHR47988">
    <property type="entry name" value="SOMATIC EMBRYOGENESIS RECEPTOR KINASE 1"/>
    <property type="match status" value="1"/>
</dbReference>
<dbReference type="Pfam" id="PF00560">
    <property type="entry name" value="LRR_1"/>
    <property type="match status" value="1"/>
</dbReference>
<dbReference type="Pfam" id="PF13855">
    <property type="entry name" value="LRR_8"/>
    <property type="match status" value="1"/>
</dbReference>
<dbReference type="Pfam" id="PF08263">
    <property type="entry name" value="LRRNT_2"/>
    <property type="match status" value="1"/>
</dbReference>
<dbReference type="Pfam" id="PF00069">
    <property type="entry name" value="Pkinase"/>
    <property type="match status" value="1"/>
</dbReference>
<dbReference type="SMART" id="SM00220">
    <property type="entry name" value="S_TKc"/>
    <property type="match status" value="1"/>
</dbReference>
<dbReference type="SUPFAM" id="SSF52058">
    <property type="entry name" value="L domain-like"/>
    <property type="match status" value="1"/>
</dbReference>
<dbReference type="SUPFAM" id="SSF56112">
    <property type="entry name" value="Protein kinase-like (PK-like)"/>
    <property type="match status" value="1"/>
</dbReference>
<dbReference type="PROSITE" id="PS00107">
    <property type="entry name" value="PROTEIN_KINASE_ATP"/>
    <property type="match status" value="1"/>
</dbReference>
<dbReference type="PROSITE" id="PS50011">
    <property type="entry name" value="PROTEIN_KINASE_DOM"/>
    <property type="match status" value="1"/>
</dbReference>
<dbReference type="PROSITE" id="PS00108">
    <property type="entry name" value="PROTEIN_KINASE_ST"/>
    <property type="match status" value="1"/>
</dbReference>
<organism>
    <name type="scientific">Arabidopsis thaliana</name>
    <name type="common">Mouse-ear cress</name>
    <dbReference type="NCBI Taxonomy" id="3702"/>
    <lineage>
        <taxon>Eukaryota</taxon>
        <taxon>Viridiplantae</taxon>
        <taxon>Streptophyta</taxon>
        <taxon>Embryophyta</taxon>
        <taxon>Tracheophyta</taxon>
        <taxon>Spermatophyta</taxon>
        <taxon>Magnoliopsida</taxon>
        <taxon>eudicotyledons</taxon>
        <taxon>Gunneridae</taxon>
        <taxon>Pentapetalae</taxon>
        <taxon>rosids</taxon>
        <taxon>malvids</taxon>
        <taxon>Brassicales</taxon>
        <taxon>Brassicaceae</taxon>
        <taxon>Camelineae</taxon>
        <taxon>Arabidopsis</taxon>
    </lineage>
</organism>
<feature type="signal peptide" evidence="5">
    <location>
        <begin position="1"/>
        <end position="32"/>
    </location>
</feature>
<feature type="chain" id="PRO_0000409726" description="Protein NSP-INTERACTING KINASE 2">
    <location>
        <begin position="33"/>
        <end position="635"/>
    </location>
</feature>
<feature type="topological domain" description="Extracellular" evidence="5">
    <location>
        <begin position="33"/>
        <end position="248"/>
    </location>
</feature>
<feature type="transmembrane region" description="Helical" evidence="5">
    <location>
        <begin position="249"/>
        <end position="269"/>
    </location>
</feature>
<feature type="topological domain" description="Cytoplasmic" evidence="5">
    <location>
        <begin position="270"/>
        <end position="635"/>
    </location>
</feature>
<feature type="repeat" description="LRR 1">
    <location>
        <begin position="104"/>
        <end position="128"/>
    </location>
</feature>
<feature type="repeat" description="LRR 2">
    <location>
        <begin position="129"/>
        <end position="153"/>
    </location>
</feature>
<feature type="repeat" description="LRR 3">
    <location>
        <begin position="155"/>
        <end position="176"/>
    </location>
</feature>
<feature type="repeat" description="LRR 4">
    <location>
        <begin position="177"/>
        <end position="200"/>
    </location>
</feature>
<feature type="domain" description="Protein kinase" evidence="6">
    <location>
        <begin position="312"/>
        <end position="591"/>
    </location>
</feature>
<feature type="region of interest" description="Disordered" evidence="8">
    <location>
        <begin position="214"/>
        <end position="242"/>
    </location>
</feature>
<feature type="region of interest" description="Interaction with geminivirus NSP protein" evidence="1">
    <location>
        <begin position="422"/>
        <end position="502"/>
    </location>
</feature>
<feature type="region of interest" description="Disordered" evidence="8">
    <location>
        <begin position="593"/>
        <end position="621"/>
    </location>
</feature>
<feature type="compositionally biased region" description="Polar residues" evidence="8">
    <location>
        <begin position="219"/>
        <end position="241"/>
    </location>
</feature>
<feature type="compositionally biased region" description="Polar residues" evidence="8">
    <location>
        <begin position="593"/>
        <end position="613"/>
    </location>
</feature>
<feature type="active site" description="Proton acceptor" evidence="6 7">
    <location>
        <position position="435"/>
    </location>
</feature>
<feature type="binding site" evidence="6">
    <location>
        <begin position="318"/>
        <end position="326"/>
    </location>
    <ligand>
        <name>ATP</name>
        <dbReference type="ChEBI" id="CHEBI:30616"/>
    </ligand>
</feature>
<feature type="binding site" evidence="6">
    <location>
        <position position="340"/>
    </location>
    <ligand>
        <name>ATP</name>
        <dbReference type="ChEBI" id="CHEBI:30616"/>
    </ligand>
</feature>
<feature type="modified residue" description="Phosphothreonine" evidence="4">
    <location>
        <position position="309"/>
    </location>
</feature>
<feature type="modified residue" description="Phosphoserine" evidence="2">
    <location>
        <position position="393"/>
    </location>
</feature>
<feature type="modified residue" description="Phosphoserine" evidence="4">
    <location>
        <position position="396"/>
    </location>
</feature>
<feature type="modified residue" description="Phosphothreonine" evidence="2">
    <location>
        <position position="408"/>
    </location>
</feature>
<feature type="modified residue" description="Phosphothreonine" evidence="3">
    <location>
        <position position="468"/>
    </location>
</feature>
<feature type="modified residue" description="Phosphothreonine" evidence="3">
    <location>
        <position position="469"/>
    </location>
</feature>
<feature type="modified residue" description="Phosphothreonine" evidence="3">
    <location>
        <position position="474"/>
    </location>
</feature>
<feature type="modified residue" description="Phosphotyrosine" evidence="2">
    <location>
        <position position="482"/>
    </location>
</feature>
<feature type="modified residue" description="Phosphoserine" evidence="2">
    <location>
        <position position="484"/>
    </location>
</feature>
<feature type="modified residue" description="Phosphothreonine" evidence="2">
    <location>
        <position position="485"/>
    </location>
</feature>
<feature type="modified residue" description="Phosphoserine" evidence="2">
    <location>
        <position position="489"/>
    </location>
</feature>
<feature type="modified residue" description="Phosphothreonine" evidence="2">
    <location>
        <position position="564"/>
    </location>
</feature>
<feature type="glycosylation site" description="N-linked (GlcNAc...) asparagine" evidence="5">
    <location>
        <position position="92"/>
    </location>
</feature>
<feature type="glycosylation site" description="N-linked (GlcNAc...) asparagine" evidence="5">
    <location>
        <position position="103"/>
    </location>
</feature>
<feature type="glycosylation site" description="N-linked (GlcNAc...) asparagine" evidence="5">
    <location>
        <position position="140"/>
    </location>
</feature>
<feature type="glycosylation site" description="N-linked (GlcNAc...) asparagine" evidence="5">
    <location>
        <position position="162"/>
    </location>
</feature>
<feature type="glycosylation site" description="N-linked (GlcNAc...) asparagine" evidence="5">
    <location>
        <position position="175"/>
    </location>
</feature>
<feature type="glycosylation site" description="N-linked (GlcNAc...) asparagine" evidence="5">
    <location>
        <position position="188"/>
    </location>
</feature>
<feature type="glycosylation site" description="N-linked (GlcNAc...) asparagine" evidence="5">
    <location>
        <position position="219"/>
    </location>
</feature>
<feature type="glycosylation site" description="N-linked (GlcNAc...) asparagine" evidence="5">
    <location>
        <position position="231"/>
    </location>
</feature>
<feature type="glycosylation site" description="N-linked (GlcNAc...) asparagine" evidence="5">
    <location>
        <position position="235"/>
    </location>
</feature>